<keyword id="KW-0143">Chaperone</keyword>
<keyword id="KW-0175">Coiled coil</keyword>
<keyword id="KW-0255">Endonuclease</keyword>
<keyword id="KW-1035">Host cytoplasm</keyword>
<keyword id="KW-1040">Host Golgi apparatus</keyword>
<keyword id="KW-0378">Hydrolase</keyword>
<keyword id="KW-0540">Nuclease</keyword>
<keyword id="KW-0694">RNA-binding</keyword>
<keyword id="KW-0543">Viral nucleoprotein</keyword>
<keyword id="KW-0946">Virion</keyword>
<sequence length="356" mass="40607">LQARQQTVSALEDKIADYKRRMADAVSRKKMDTKPTDPTGIEPDDHLKERSSLRYGNVLDVNAIDIEEPSGQTADWYTIGVYVIGFTLPIILKALYMLSTRGRQTVKENKGTRIRFKDDTSFEDINGIRRPKHLYVSMPTAQSTMKAEELTPGRFRTIVCGLFPTQIQVRNIMSPVMGVIGFSFFVKDWADRIREFMEKECPFIKPEVKPGTPAQEAEFLKRNKVYFMQRQDVLDKNHVADIDKLIDYAASGDPTSPDNIESPNAPWVFACAPDRCPPTCIYVAGMAELGAFFSILQDMRNTIMASKTVGTAEEKLKKKSSFYQSYLRRTQSMGIQLDQRIILLYMLEWGKEMVDH</sequence>
<reference key="1">
    <citation type="journal article" date="1994" name="J. Infect. Dis.">
        <title>Genetic identification of a new Puumala virus strain causing severe hemorrhagic fever with renal syndrome in Germany.</title>
        <authorList>
            <person name="Pilaski J."/>
            <person name="Feldmann H."/>
            <person name="Morzunov S.P."/>
            <person name="Rollin P.E."/>
            <person name="Ruo S.L."/>
            <person name="Lauer B."/>
            <person name="Peters C.J."/>
            <person name="Nichol S.T."/>
        </authorList>
    </citation>
    <scope>NUCLEOTIDE SEQUENCE [GENOMIC RNA]</scope>
</reference>
<organism>
    <name type="scientific">Puumala virus (strain Berkel)</name>
    <dbReference type="NCBI Taxonomy" id="38998"/>
    <lineage>
        <taxon>Viruses</taxon>
        <taxon>Riboviria</taxon>
        <taxon>Orthornavirae</taxon>
        <taxon>Negarnaviricota</taxon>
        <taxon>Polyploviricotina</taxon>
        <taxon>Ellioviricetes</taxon>
        <taxon>Bunyavirales</taxon>
        <taxon>Hantaviridae</taxon>
        <taxon>Mammantavirinae</taxon>
        <taxon>Orthohantavirus</taxon>
        <taxon>Orthohantavirus puumalaense</taxon>
    </lineage>
</organism>
<evidence type="ECO:0000250" key="1">
    <source>
        <dbReference type="UniProtKB" id="O36307"/>
    </source>
</evidence>
<evidence type="ECO:0000250" key="2">
    <source>
        <dbReference type="UniProtKB" id="P05133"/>
    </source>
</evidence>
<evidence type="ECO:0000250" key="3">
    <source>
        <dbReference type="UniProtKB" id="P27313"/>
    </source>
</evidence>
<evidence type="ECO:0000250" key="4">
    <source>
        <dbReference type="UniProtKB" id="Q88918"/>
    </source>
</evidence>
<evidence type="ECO:0000250" key="5">
    <source>
        <dbReference type="UniProtKB" id="Q89462"/>
    </source>
</evidence>
<evidence type="ECO:0000255" key="6"/>
<evidence type="ECO:0000256" key="7">
    <source>
        <dbReference type="SAM" id="MobiDB-lite"/>
    </source>
</evidence>
<evidence type="ECO:0000305" key="8"/>
<organismHost>
    <name type="scientific">Homo sapiens</name>
    <name type="common">Human</name>
    <dbReference type="NCBI Taxonomy" id="9606"/>
</organismHost>
<organismHost>
    <name type="scientific">Myodes glareolus</name>
    <name type="common">Bank vole</name>
    <name type="synonym">Clethrionomys glareolus</name>
    <dbReference type="NCBI Taxonomy" id="447135"/>
</organismHost>
<name>NCAP_PUUMB</name>
<feature type="chain" id="PRO_0000222011" description="Nucleoprotein">
    <location>
        <begin position="1" status="less than"/>
        <end position="356" status="greater than"/>
    </location>
</feature>
<feature type="region of interest" description="Disordered" evidence="7">
    <location>
        <begin position="26"/>
        <end position="46"/>
    </location>
</feature>
<feature type="region of interest" description="Interaction with glycoprotein N" evidence="4">
    <location>
        <begin position="37"/>
        <end position="205"/>
    </location>
</feature>
<feature type="region of interest" description="Homomultimerization" evidence="2">
    <location>
        <begin position="57"/>
        <end position="82"/>
    </location>
</feature>
<feature type="region of interest" description="Interaction with host RPS19" evidence="5">
    <location>
        <begin position="107"/>
        <end position="132"/>
    </location>
</feature>
<feature type="region of interest" description="Viral RNA-binding" evidence="2">
    <location>
        <begin position="132"/>
        <end position="174"/>
    </location>
</feature>
<feature type="region of interest" description="Interaction with host UBE2I/UBC9" evidence="2">
    <location>
        <begin position="145"/>
        <end position="148"/>
    </location>
</feature>
<feature type="coiled-coil region" evidence="6">
    <location>
        <begin position="1"/>
        <end position="28"/>
    </location>
</feature>
<feature type="short sequence motif" description="YxxL" evidence="2">
    <location>
        <begin position="135"/>
        <end position="138"/>
    </location>
</feature>
<feature type="compositionally biased region" description="Basic and acidic residues" evidence="7">
    <location>
        <begin position="26"/>
        <end position="35"/>
    </location>
</feature>
<feature type="site" description="Important for the endonuclease activity" evidence="5">
    <location>
        <position position="45"/>
    </location>
</feature>
<feature type="site" description="Important for the endonuclease activity" evidence="5">
    <location>
        <position position="60"/>
    </location>
</feature>
<feature type="non-terminal residue">
    <location>
        <position position="1"/>
    </location>
</feature>
<feature type="non-terminal residue">
    <location>
        <position position="356"/>
    </location>
</feature>
<comment type="function">
    <text evidence="1 2 5 8">Encapsidates the genome protecting it from nucleases (Probable). The encapsidated genomic RNA is termed the nucleocapsid (NC) and serves as template for transcription and replication (Probable). The nucleocapsid has a left-handed helical structure (By similarity). As a trimer, specifically binds and acts as a chaperone to unwind the panhandle structure formed by the viral RNA (vRNA) termini (By similarity). Involved in the transcription and replication initiation of vRNA by mediating primer annealing (By similarity). Plays a role in cap snatching by sequestering capped RNAs in P bodies for use by the viral RdRp during transcription initiation (By similarity). Substitutes for the cellular cap-binding complex (eIF4F) to preferentially facilitate the translation of capped mRNAs (By similarity). Initiates the translation by specifically binding to the cap and 40S ribosomal subunit (By similarity). Prevents the viral glycoprotein N (Gn) from autophagy-dependent breakdown maybe by blocking autophagosome formation (By similarity). Inhibits host EIF2AK2/PKR dimerization to prevent PKR-induced translational shutdown in cells and thus the activation of the antiviral state (By similarity). Also displays sequence-unspecific DNA endonuclease activity (By similarity).</text>
</comment>
<comment type="subunit">
    <text evidence="2 3 4 5">Homotrimer (By similarity). Homomultimer (By similarity). Homomultimerizes and binds to viral genomic RNA to form the nucleocapsid (By similarity). Interacts with host MAP1LC3B; this interaction participates to the protection of Gn from virus-triggered autophagy (By similarity). Interacts with host SNAP29; this interaction participates to the protection of glycoprotein N from virus-triggered autophagy (By similarity). Interacts (via N-terminus) with host RPS19; this interaction probably mediates the loading of the 40S ribosomal subunit on viral capped mRNA during N-mediated translation initiation (By similarity). Interacts with the viral RdRp (By similarity). Interacts with host SUMO1 (via N-terminus) (By similarity). Interacts with host DAXX (By similarity). Interacts with the viral glycoprotein N (via C-terminus) (By similarity). Interacts with the viral glycoprotein C (via C-terminus) (By similarity).</text>
</comment>
<comment type="subcellular location">
    <subcellularLocation>
        <location evidence="2">Virion</location>
    </subcellularLocation>
    <subcellularLocation>
        <location evidence="2">Host cytoplasm</location>
        <location evidence="2">Host perinuclear region</location>
    </subcellularLocation>
    <subcellularLocation>
        <location evidence="2">Host Golgi apparatus</location>
        <location evidence="2">Host cis-Golgi network</location>
    </subcellularLocation>
    <text evidence="2">Internal protein of virus particle.</text>
</comment>
<comment type="domain">
    <text evidence="2 5">The N-terminus is required for chaperone activity and, in trimeric form, this region likely serves in high affinity vRNA panhandle recognition (By similarity). The N-terminus also contains a coiled coil region, which probably participates in but is insufficient to initiate N trimerization (By similarity). The YxxL motif is indispensable for the interaction with host MAP1LC3B (By similarity). The central region is involved in specific RNA-binding (By similarity). Has distinct cap- and RNA-binding sites so it can bind simultaneously both the vRNA and mRNA cap (By similarity).</text>
</comment>
<comment type="similarity">
    <text evidence="8">Belongs to the hantavirus nucleocapsid protein family.</text>
</comment>
<accession>P41267</accession>
<gene>
    <name type="primary">N</name>
</gene>
<protein>
    <recommendedName>
        <fullName>Nucleoprotein</fullName>
        <ecNumber evidence="5">3.1.-.-</ecNumber>
    </recommendedName>
    <alternativeName>
        <fullName>Nucleocapsid protein</fullName>
        <shortName>Protein N</shortName>
    </alternativeName>
</protein>
<dbReference type="EC" id="3.1.-.-" evidence="5"/>
<dbReference type="EMBL" id="L36943">
    <property type="protein sequence ID" value="AAA50567.1"/>
    <property type="molecule type" value="Genomic_RNA"/>
</dbReference>
<dbReference type="SMR" id="P41267"/>
<dbReference type="GO" id="GO:0044177">
    <property type="term" value="C:host cell Golgi apparatus"/>
    <property type="evidence" value="ECO:0007669"/>
    <property type="project" value="UniProtKB-SubCell"/>
</dbReference>
<dbReference type="GO" id="GO:0044220">
    <property type="term" value="C:host cell perinuclear region of cytoplasm"/>
    <property type="evidence" value="ECO:0007669"/>
    <property type="project" value="UniProtKB-SubCell"/>
</dbReference>
<dbReference type="GO" id="GO:0019013">
    <property type="term" value="C:viral nucleocapsid"/>
    <property type="evidence" value="ECO:0007669"/>
    <property type="project" value="UniProtKB-KW"/>
</dbReference>
<dbReference type="GO" id="GO:0004519">
    <property type="term" value="F:endonuclease activity"/>
    <property type="evidence" value="ECO:0007669"/>
    <property type="project" value="UniProtKB-KW"/>
</dbReference>
<dbReference type="GO" id="GO:0003723">
    <property type="term" value="F:RNA binding"/>
    <property type="evidence" value="ECO:0007669"/>
    <property type="project" value="UniProtKB-KW"/>
</dbReference>
<dbReference type="Gene3D" id="1.20.58.90">
    <property type="match status" value="1"/>
</dbReference>
<dbReference type="InterPro" id="IPR002214">
    <property type="entry name" value="Hanta_nucleocap"/>
</dbReference>
<dbReference type="Pfam" id="PF00846">
    <property type="entry name" value="Hanta_nucleocap"/>
    <property type="match status" value="1"/>
</dbReference>
<proteinExistence type="inferred from homology"/>